<name>PEA15_MOUSE</name>
<gene>
    <name type="primary">Pea15</name>
    <name type="synonym">Pea15a</name>
</gene>
<protein>
    <recommendedName>
        <fullName>Astrocytic phosphoprotein PEA-15</fullName>
    </recommendedName>
    <alternativeName>
        <fullName>15 kDa phosphoprotein enriched in astrocytes</fullName>
    </alternativeName>
</protein>
<accession>Q62048</accession>
<accession>Q3U5N7</accession>
<sequence>MAEYGTLLQDLTNNITLEDLEQLKSACKEDIPSEKSEEITTGSAWFSFLESHNKLDKDNLSYIEHIFEISRRPDLLTMVVDYRTRVLKISEEEELDTKLTRIPSAKKYKDIIRQPSEEEIIKLAPPPKKA</sequence>
<keyword id="KW-0002">3D-structure</keyword>
<keyword id="KW-0025">Alternative splicing</keyword>
<keyword id="KW-0053">Apoptosis</keyword>
<keyword id="KW-0963">Cytoplasm</keyword>
<keyword id="KW-0903">Direct protein sequencing</keyword>
<keyword id="KW-0597">Phosphoprotein</keyword>
<keyword id="KW-1185">Reference proteome</keyword>
<keyword id="KW-0762">Sugar transport</keyword>
<keyword id="KW-0813">Transport</keyword>
<comment type="function">
    <text evidence="1 5">Blocks Ras-mediated inhibition of integrin activation and modulates the ERK MAP kinase cascade. Inhibits RPS6KA3 activities by retaining it in the cytoplasm. Inhibits both TNFRSF6- and TNFRSF1A-mediated CASP8 activity and apoptosis. Regulates glucose transport by controlling both the content of SLC2A1 glucose transporters on the plasma membrane and the insulin-dependent trafficking of SLC2A4 from the cell interior to the surface (By similarity).</text>
</comment>
<comment type="subunit">
    <text evidence="1 6">Binds RPS6KA3, MAPK3 and MAPK1. Interacts with CASP8 and FADD (By similarity). Transient interaction with PLD1 and PLD2.</text>
</comment>
<comment type="subcellular location">
    <subcellularLocation>
        <location evidence="6">Cytoplasm</location>
    </subcellularLocation>
    <text>Associated with microtubules.</text>
</comment>
<comment type="alternative products">
    <event type="alternative splicing"/>
    <isoform>
        <id>Q62048-1</id>
        <name>1</name>
        <sequence type="displayed"/>
    </isoform>
    <isoform>
        <id>Q62048-2</id>
        <name>2</name>
        <sequence type="described" ref="VSP_007736 VSP_007737"/>
    </isoform>
</comment>
<comment type="tissue specificity">
    <text>Predominantly expressed in the brain. Low levels in some peripheral organs.</text>
</comment>
<comment type="PTM">
    <text evidence="5">Phosphorylated by protein kinase C and calcium-calmodulin-dependent protein kinase. These phosphorylation events are modulated by neurotransmitters or hormones.</text>
</comment>
<comment type="miscellaneous">
    <text>Increases PLD1 and PLD2 levels, possibly by stabilizing the protein.</text>
</comment>
<dbReference type="EMBL" id="X86694">
    <property type="protein sequence ID" value="CAA60387.1"/>
    <property type="molecule type" value="Genomic_DNA"/>
</dbReference>
<dbReference type="EMBL" id="AK089070">
    <property type="protein sequence ID" value="BAC40734.1"/>
    <property type="molecule type" value="mRNA"/>
</dbReference>
<dbReference type="EMBL" id="AK153141">
    <property type="protein sequence ID" value="BAE31752.1"/>
    <property type="molecule type" value="mRNA"/>
</dbReference>
<dbReference type="EMBL" id="AK153493">
    <property type="protein sequence ID" value="BAE32041.1"/>
    <property type="molecule type" value="mRNA"/>
</dbReference>
<dbReference type="EMBL" id="AK161635">
    <property type="protein sequence ID" value="BAE36504.1"/>
    <property type="molecule type" value="mRNA"/>
</dbReference>
<dbReference type="EMBL" id="AK161977">
    <property type="protein sequence ID" value="BAE36662.1"/>
    <property type="molecule type" value="mRNA"/>
</dbReference>
<dbReference type="EMBL" id="BC038282">
    <property type="protein sequence ID" value="AAH38282.1"/>
    <property type="molecule type" value="mRNA"/>
</dbReference>
<dbReference type="CCDS" id="CCDS15510.1">
    <molecule id="Q62048-1"/>
</dbReference>
<dbReference type="CCDS" id="CCDS87924.1">
    <molecule id="Q62048-2"/>
</dbReference>
<dbReference type="PIR" id="S55385">
    <property type="entry name" value="S55385"/>
</dbReference>
<dbReference type="RefSeq" id="NP_001316798.1">
    <molecule id="Q62048-1"/>
    <property type="nucleotide sequence ID" value="NM_001329869.1"/>
</dbReference>
<dbReference type="RefSeq" id="NP_001316800.1">
    <molecule id="Q62048-2"/>
    <property type="nucleotide sequence ID" value="NM_001329871.1"/>
</dbReference>
<dbReference type="RefSeq" id="NP_035193.1">
    <molecule id="Q62048-1"/>
    <property type="nucleotide sequence ID" value="NM_011063.3"/>
</dbReference>
<dbReference type="RefSeq" id="XP_006496765.1">
    <molecule id="Q62048-1"/>
    <property type="nucleotide sequence ID" value="XM_006496702.1"/>
</dbReference>
<dbReference type="PDB" id="2LS7">
    <property type="method" value="NMR"/>
    <property type="chains" value="A=1-92"/>
</dbReference>
<dbReference type="PDBsum" id="2LS7"/>
<dbReference type="BMRB" id="Q62048"/>
<dbReference type="SMR" id="Q62048"/>
<dbReference type="BioGRID" id="202103">
    <property type="interactions" value="5"/>
</dbReference>
<dbReference type="DIP" id="DIP-60009N"/>
<dbReference type="FunCoup" id="Q62048">
    <property type="interactions" value="1817"/>
</dbReference>
<dbReference type="IntAct" id="Q62048">
    <property type="interactions" value="1"/>
</dbReference>
<dbReference type="STRING" id="10090.ENSMUSP00000013842"/>
<dbReference type="iPTMnet" id="Q62048"/>
<dbReference type="PhosphoSitePlus" id="Q62048"/>
<dbReference type="jPOST" id="Q62048"/>
<dbReference type="PaxDb" id="10090-ENSMUSP00000013842"/>
<dbReference type="PeptideAtlas" id="Q62048"/>
<dbReference type="ProteomicsDB" id="301785">
    <molecule id="Q62048-1"/>
</dbReference>
<dbReference type="ProteomicsDB" id="301786">
    <molecule id="Q62048-2"/>
</dbReference>
<dbReference type="Pumba" id="Q62048"/>
<dbReference type="Antibodypedia" id="20486">
    <property type="antibodies" value="492 antibodies from 36 providers"/>
</dbReference>
<dbReference type="DNASU" id="18611"/>
<dbReference type="Ensembl" id="ENSMUST00000013842.12">
    <molecule id="Q62048-1"/>
    <property type="protein sequence ID" value="ENSMUSP00000013842.6"/>
    <property type="gene ID" value="ENSMUSG00000013698.13"/>
</dbReference>
<dbReference type="Ensembl" id="ENSMUST00000111247.8">
    <molecule id="Q62048-2"/>
    <property type="protein sequence ID" value="ENSMUSP00000106878.2"/>
    <property type="gene ID" value="ENSMUSG00000013698.13"/>
</dbReference>
<dbReference type="GeneID" id="18611"/>
<dbReference type="KEGG" id="mmu:18611"/>
<dbReference type="UCSC" id="uc007dpy.1">
    <molecule id="Q62048-1"/>
    <property type="organism name" value="mouse"/>
</dbReference>
<dbReference type="AGR" id="MGI:104799"/>
<dbReference type="CTD" id="18611"/>
<dbReference type="MGI" id="MGI:104799">
    <property type="gene designation" value="Pea15a"/>
</dbReference>
<dbReference type="VEuPathDB" id="HostDB:ENSMUSG00000013698"/>
<dbReference type="eggNOG" id="KOG3573">
    <property type="taxonomic scope" value="Eukaryota"/>
</dbReference>
<dbReference type="GeneTree" id="ENSGT00390000000230"/>
<dbReference type="HOGENOM" id="CLU_159419_0_0_1"/>
<dbReference type="InParanoid" id="Q62048"/>
<dbReference type="OMA" id="ATSKDWF"/>
<dbReference type="OrthoDB" id="9931131at2759"/>
<dbReference type="PhylomeDB" id="Q62048"/>
<dbReference type="TreeFam" id="TF332405"/>
<dbReference type="Reactome" id="R-MMU-112409">
    <property type="pathway name" value="RAF-independent MAPK1/3 activation"/>
</dbReference>
<dbReference type="Reactome" id="R-MMU-5673001">
    <property type="pathway name" value="RAF/MAP kinase cascade"/>
</dbReference>
<dbReference type="BioGRID-ORCS" id="18611">
    <property type="hits" value="4 hits in 79 CRISPR screens"/>
</dbReference>
<dbReference type="ChiTaRS" id="Pea15a">
    <property type="organism name" value="mouse"/>
</dbReference>
<dbReference type="EvolutionaryTrace" id="Q62048"/>
<dbReference type="PRO" id="PR:Q62048"/>
<dbReference type="Proteomes" id="UP000000589">
    <property type="component" value="Chromosome 1"/>
</dbReference>
<dbReference type="RNAct" id="Q62048">
    <property type="molecule type" value="protein"/>
</dbReference>
<dbReference type="Bgee" id="ENSMUSG00000013698">
    <property type="expression patterns" value="Expressed in embryonic brain and 266 other cell types or tissues"/>
</dbReference>
<dbReference type="ExpressionAtlas" id="Q62048">
    <property type="expression patterns" value="baseline and differential"/>
</dbReference>
<dbReference type="GO" id="GO:0005829">
    <property type="term" value="C:cytosol"/>
    <property type="evidence" value="ECO:0007669"/>
    <property type="project" value="Ensembl"/>
</dbReference>
<dbReference type="GO" id="GO:0005875">
    <property type="term" value="C:microtubule associated complex"/>
    <property type="evidence" value="ECO:0000303"/>
    <property type="project" value="UniProtKB"/>
</dbReference>
<dbReference type="GO" id="GO:0005654">
    <property type="term" value="C:nucleoplasm"/>
    <property type="evidence" value="ECO:0007669"/>
    <property type="project" value="Ensembl"/>
</dbReference>
<dbReference type="GO" id="GO:0005080">
    <property type="term" value="F:protein kinase C binding"/>
    <property type="evidence" value="ECO:0000304"/>
    <property type="project" value="MGI"/>
</dbReference>
<dbReference type="GO" id="GO:0006915">
    <property type="term" value="P:apoptotic process"/>
    <property type="evidence" value="ECO:0007669"/>
    <property type="project" value="UniProtKB-KW"/>
</dbReference>
<dbReference type="GO" id="GO:0035556">
    <property type="term" value="P:intracellular signal transduction"/>
    <property type="evidence" value="ECO:0000304"/>
    <property type="project" value="MGI"/>
</dbReference>
<dbReference type="GO" id="GO:0000165">
    <property type="term" value="P:MAPK cascade"/>
    <property type="evidence" value="ECO:0007669"/>
    <property type="project" value="InterPro"/>
</dbReference>
<dbReference type="GO" id="GO:0046325">
    <property type="term" value="P:negative regulation of D-glucose import"/>
    <property type="evidence" value="ECO:0000250"/>
    <property type="project" value="UniProtKB"/>
</dbReference>
<dbReference type="GO" id="GO:1902042">
    <property type="term" value="P:negative regulation of extrinsic apoptotic signaling pathway via death domain receptors"/>
    <property type="evidence" value="ECO:0000314"/>
    <property type="project" value="MGI"/>
</dbReference>
<dbReference type="GO" id="GO:1902043">
    <property type="term" value="P:positive regulation of extrinsic apoptotic signaling pathway via death domain receptors"/>
    <property type="evidence" value="ECO:0000314"/>
    <property type="project" value="MGI"/>
</dbReference>
<dbReference type="CDD" id="cd08338">
    <property type="entry name" value="DED_PEA15"/>
    <property type="match status" value="1"/>
</dbReference>
<dbReference type="FunFam" id="1.10.533.10:FF:000026">
    <property type="entry name" value="astrocytic phosphoprotein PEA-15 isoform X1"/>
    <property type="match status" value="1"/>
</dbReference>
<dbReference type="Gene3D" id="1.10.533.10">
    <property type="entry name" value="Death Domain, Fas"/>
    <property type="match status" value="1"/>
</dbReference>
<dbReference type="InterPro" id="IPR011029">
    <property type="entry name" value="DEATH-like_dom_sf"/>
</dbReference>
<dbReference type="InterPro" id="IPR001875">
    <property type="entry name" value="DED_dom"/>
</dbReference>
<dbReference type="InterPro" id="IPR029546">
    <property type="entry name" value="PEA15_DED"/>
</dbReference>
<dbReference type="PANTHER" id="PTHR48169:SF1">
    <property type="entry name" value="ASTROCYTIC PHOSPHOPROTEIN PEA-15"/>
    <property type="match status" value="1"/>
</dbReference>
<dbReference type="PANTHER" id="PTHR48169">
    <property type="entry name" value="DED DOMAIN-CONTAINING PROTEIN"/>
    <property type="match status" value="1"/>
</dbReference>
<dbReference type="Pfam" id="PF01335">
    <property type="entry name" value="DED"/>
    <property type="match status" value="1"/>
</dbReference>
<dbReference type="SMART" id="SM00031">
    <property type="entry name" value="DED"/>
    <property type="match status" value="1"/>
</dbReference>
<dbReference type="SUPFAM" id="SSF47986">
    <property type="entry name" value="DEATH domain"/>
    <property type="match status" value="1"/>
</dbReference>
<dbReference type="PROSITE" id="PS50168">
    <property type="entry name" value="DED"/>
    <property type="match status" value="1"/>
</dbReference>
<feature type="chain" id="PRO_0000191283" description="Astrocytic phosphoprotein PEA-15">
    <location>
        <begin position="1"/>
        <end position="130"/>
    </location>
</feature>
<feature type="domain" description="DED" evidence="4">
    <location>
        <begin position="3"/>
        <end position="81"/>
    </location>
</feature>
<feature type="region of interest" description="Microtubule-binding" evidence="3">
    <location>
        <begin position="98"/>
        <end position="107"/>
    </location>
</feature>
<feature type="region of interest" description="Microtubule-binding" evidence="3">
    <location>
        <begin position="122"/>
        <end position="129"/>
    </location>
</feature>
<feature type="modified residue" description="Phosphoserine" evidence="2">
    <location>
        <position position="61"/>
    </location>
</feature>
<feature type="modified residue" description="Phosphoserine" evidence="9">
    <location>
        <position position="90"/>
    </location>
</feature>
<feature type="modified residue" description="Phosphoserine; by PKC" evidence="5 8">
    <location>
        <position position="104"/>
    </location>
</feature>
<feature type="modified residue" description="Phosphoserine; by CaMK2" evidence="5 8 9">
    <location>
        <position position="116"/>
    </location>
</feature>
<feature type="splice variant" id="VSP_007736" description="In isoform 2." evidence="7">
    <location>
        <begin position="36"/>
        <end position="57"/>
    </location>
</feature>
<feature type="splice variant" id="VSP_007737" description="In isoform 2." evidence="7">
    <original>D</original>
    <variation>N</variation>
    <location>
        <position position="58"/>
    </location>
</feature>
<feature type="mutagenesis site" description="Abolishes inhibitory effect on FAS-mediated apoptosis. Does not change effect on TNFRSF1A-mediated apoptosis." evidence="5">
    <original>S</original>
    <variation>A</variation>
    <location>
        <position position="104"/>
    </location>
</feature>
<feature type="mutagenesis site" description="Abolishes inhibitory effect on FAS-mediated apoptosis. Does not change effect on TNFRSF1A-mediated apoptosis." evidence="5">
    <original>S</original>
    <variation>A</variation>
    <location>
        <position position="116"/>
    </location>
</feature>
<feature type="helix" evidence="10">
    <location>
        <begin position="2"/>
        <end position="14"/>
    </location>
</feature>
<feature type="helix" evidence="10">
    <location>
        <begin position="17"/>
        <end position="26"/>
    </location>
</feature>
<feature type="turn" evidence="10">
    <location>
        <begin position="27"/>
        <end position="30"/>
    </location>
</feature>
<feature type="helix" evidence="10">
    <location>
        <begin position="33"/>
        <end position="37"/>
    </location>
</feature>
<feature type="helix" evidence="10">
    <location>
        <begin position="42"/>
        <end position="51"/>
    </location>
</feature>
<feature type="turn" evidence="10">
    <location>
        <begin position="52"/>
        <end position="54"/>
    </location>
</feature>
<feature type="helix" evidence="10">
    <location>
        <begin position="61"/>
        <end position="69"/>
    </location>
</feature>
<feature type="helix" evidence="10">
    <location>
        <begin position="73"/>
        <end position="89"/>
    </location>
</feature>
<evidence type="ECO:0000250" key="1"/>
<evidence type="ECO:0000250" key="2">
    <source>
        <dbReference type="UniProtKB" id="Q15121"/>
    </source>
</evidence>
<evidence type="ECO:0000255" key="3"/>
<evidence type="ECO:0000255" key="4">
    <source>
        <dbReference type="PROSITE-ProRule" id="PRU00065"/>
    </source>
</evidence>
<evidence type="ECO:0000269" key="5">
    <source>
    </source>
</evidence>
<evidence type="ECO:0000269" key="6">
    <source>
    </source>
</evidence>
<evidence type="ECO:0000303" key="7">
    <source>
    </source>
</evidence>
<evidence type="ECO:0007744" key="8">
    <source>
    </source>
</evidence>
<evidence type="ECO:0007744" key="9">
    <source>
    </source>
</evidence>
<evidence type="ECO:0007829" key="10">
    <source>
        <dbReference type="PDB" id="2LS7"/>
    </source>
</evidence>
<reference key="1">
    <citation type="journal article" date="1996" name="J. Biol. Chem.">
        <title>The major astrocytic phosphoprotein PEA-15 is encoded by two mRNAs conserved on their full length in mouse and human.</title>
        <authorList>
            <person name="Estelles A."/>
            <person name="Yokoyama M."/>
            <person name="Nothias F."/>
            <person name="Vincent J.-D."/>
            <person name="Glowinski J."/>
            <person name="Vernier P."/>
            <person name="Chneiweiss H."/>
        </authorList>
    </citation>
    <scope>NUCLEOTIDE SEQUENCE [GENOMIC DNA] (ISOFORM 1)</scope>
    <scope>PARTIAL PROTEIN SEQUENCE</scope>
    <source>
        <strain>SWR/J</strain>
        <tissue>Astrocyte</tissue>
    </source>
</reference>
<reference key="2">
    <citation type="journal article" date="2001" name="Mamm. Genome">
        <title>Identification of a novel, alternatively spliced isoform and single nucleotide polymorphisms in the murine Pea-15 gene.</title>
        <authorList>
            <person name="Underhill D.A."/>
            <person name="Vogan K.J."/>
            <person name="Underhill T.M."/>
            <person name="Gros P."/>
        </authorList>
    </citation>
    <scope>NUCLEOTIDE SEQUENCE [MRNA] (ISOFORMS 1 AND 2)</scope>
</reference>
<reference key="3">
    <citation type="journal article" date="2005" name="Science">
        <title>The transcriptional landscape of the mammalian genome.</title>
        <authorList>
            <person name="Carninci P."/>
            <person name="Kasukawa T."/>
            <person name="Katayama S."/>
            <person name="Gough J."/>
            <person name="Frith M.C."/>
            <person name="Maeda N."/>
            <person name="Oyama R."/>
            <person name="Ravasi T."/>
            <person name="Lenhard B."/>
            <person name="Wells C."/>
            <person name="Kodzius R."/>
            <person name="Shimokawa K."/>
            <person name="Bajic V.B."/>
            <person name="Brenner S.E."/>
            <person name="Batalov S."/>
            <person name="Forrest A.R."/>
            <person name="Zavolan M."/>
            <person name="Davis M.J."/>
            <person name="Wilming L.G."/>
            <person name="Aidinis V."/>
            <person name="Allen J.E."/>
            <person name="Ambesi-Impiombato A."/>
            <person name="Apweiler R."/>
            <person name="Aturaliya R.N."/>
            <person name="Bailey T.L."/>
            <person name="Bansal M."/>
            <person name="Baxter L."/>
            <person name="Beisel K.W."/>
            <person name="Bersano T."/>
            <person name="Bono H."/>
            <person name="Chalk A.M."/>
            <person name="Chiu K.P."/>
            <person name="Choudhary V."/>
            <person name="Christoffels A."/>
            <person name="Clutterbuck D.R."/>
            <person name="Crowe M.L."/>
            <person name="Dalla E."/>
            <person name="Dalrymple B.P."/>
            <person name="de Bono B."/>
            <person name="Della Gatta G."/>
            <person name="di Bernardo D."/>
            <person name="Down T."/>
            <person name="Engstrom P."/>
            <person name="Fagiolini M."/>
            <person name="Faulkner G."/>
            <person name="Fletcher C.F."/>
            <person name="Fukushima T."/>
            <person name="Furuno M."/>
            <person name="Futaki S."/>
            <person name="Gariboldi M."/>
            <person name="Georgii-Hemming P."/>
            <person name="Gingeras T.R."/>
            <person name="Gojobori T."/>
            <person name="Green R.E."/>
            <person name="Gustincich S."/>
            <person name="Harbers M."/>
            <person name="Hayashi Y."/>
            <person name="Hensch T.K."/>
            <person name="Hirokawa N."/>
            <person name="Hill D."/>
            <person name="Huminiecki L."/>
            <person name="Iacono M."/>
            <person name="Ikeo K."/>
            <person name="Iwama A."/>
            <person name="Ishikawa T."/>
            <person name="Jakt M."/>
            <person name="Kanapin A."/>
            <person name="Katoh M."/>
            <person name="Kawasawa Y."/>
            <person name="Kelso J."/>
            <person name="Kitamura H."/>
            <person name="Kitano H."/>
            <person name="Kollias G."/>
            <person name="Krishnan S.P."/>
            <person name="Kruger A."/>
            <person name="Kummerfeld S.K."/>
            <person name="Kurochkin I.V."/>
            <person name="Lareau L.F."/>
            <person name="Lazarevic D."/>
            <person name="Lipovich L."/>
            <person name="Liu J."/>
            <person name="Liuni S."/>
            <person name="McWilliam S."/>
            <person name="Madan Babu M."/>
            <person name="Madera M."/>
            <person name="Marchionni L."/>
            <person name="Matsuda H."/>
            <person name="Matsuzawa S."/>
            <person name="Miki H."/>
            <person name="Mignone F."/>
            <person name="Miyake S."/>
            <person name="Morris K."/>
            <person name="Mottagui-Tabar S."/>
            <person name="Mulder N."/>
            <person name="Nakano N."/>
            <person name="Nakauchi H."/>
            <person name="Ng P."/>
            <person name="Nilsson R."/>
            <person name="Nishiguchi S."/>
            <person name="Nishikawa S."/>
            <person name="Nori F."/>
            <person name="Ohara O."/>
            <person name="Okazaki Y."/>
            <person name="Orlando V."/>
            <person name="Pang K.C."/>
            <person name="Pavan W.J."/>
            <person name="Pavesi G."/>
            <person name="Pesole G."/>
            <person name="Petrovsky N."/>
            <person name="Piazza S."/>
            <person name="Reed J."/>
            <person name="Reid J.F."/>
            <person name="Ring B.Z."/>
            <person name="Ringwald M."/>
            <person name="Rost B."/>
            <person name="Ruan Y."/>
            <person name="Salzberg S.L."/>
            <person name="Sandelin A."/>
            <person name="Schneider C."/>
            <person name="Schoenbach C."/>
            <person name="Sekiguchi K."/>
            <person name="Semple C.A."/>
            <person name="Seno S."/>
            <person name="Sessa L."/>
            <person name="Sheng Y."/>
            <person name="Shibata Y."/>
            <person name="Shimada H."/>
            <person name="Shimada K."/>
            <person name="Silva D."/>
            <person name="Sinclair B."/>
            <person name="Sperling S."/>
            <person name="Stupka E."/>
            <person name="Sugiura K."/>
            <person name="Sultana R."/>
            <person name="Takenaka Y."/>
            <person name="Taki K."/>
            <person name="Tammoja K."/>
            <person name="Tan S.L."/>
            <person name="Tang S."/>
            <person name="Taylor M.S."/>
            <person name="Tegner J."/>
            <person name="Teichmann S.A."/>
            <person name="Ueda H.R."/>
            <person name="van Nimwegen E."/>
            <person name="Verardo R."/>
            <person name="Wei C.L."/>
            <person name="Yagi K."/>
            <person name="Yamanishi H."/>
            <person name="Zabarovsky E."/>
            <person name="Zhu S."/>
            <person name="Zimmer A."/>
            <person name="Hide W."/>
            <person name="Bult C."/>
            <person name="Grimmond S.M."/>
            <person name="Teasdale R.D."/>
            <person name="Liu E.T."/>
            <person name="Brusic V."/>
            <person name="Quackenbush J."/>
            <person name="Wahlestedt C."/>
            <person name="Mattick J.S."/>
            <person name="Hume D.A."/>
            <person name="Kai C."/>
            <person name="Sasaki D."/>
            <person name="Tomaru Y."/>
            <person name="Fukuda S."/>
            <person name="Kanamori-Katayama M."/>
            <person name="Suzuki M."/>
            <person name="Aoki J."/>
            <person name="Arakawa T."/>
            <person name="Iida J."/>
            <person name="Imamura K."/>
            <person name="Itoh M."/>
            <person name="Kato T."/>
            <person name="Kawaji H."/>
            <person name="Kawagashira N."/>
            <person name="Kawashima T."/>
            <person name="Kojima M."/>
            <person name="Kondo S."/>
            <person name="Konno H."/>
            <person name="Nakano K."/>
            <person name="Ninomiya N."/>
            <person name="Nishio T."/>
            <person name="Okada M."/>
            <person name="Plessy C."/>
            <person name="Shibata K."/>
            <person name="Shiraki T."/>
            <person name="Suzuki S."/>
            <person name="Tagami M."/>
            <person name="Waki K."/>
            <person name="Watahiki A."/>
            <person name="Okamura-Oho Y."/>
            <person name="Suzuki H."/>
            <person name="Kawai J."/>
            <person name="Hayashizaki Y."/>
        </authorList>
    </citation>
    <scope>NUCLEOTIDE SEQUENCE [LARGE SCALE MRNA] (ISOFORM 1)</scope>
    <source>
        <strain>C57BL/6J</strain>
        <strain>NOD</strain>
        <tissue>Bone marrow</tissue>
        <tissue>Cerebellum</tissue>
        <tissue>Thymus</tissue>
    </source>
</reference>
<reference key="4">
    <citation type="journal article" date="2004" name="Genome Res.">
        <title>The status, quality, and expansion of the NIH full-length cDNA project: the Mammalian Gene Collection (MGC).</title>
        <authorList>
            <consortium name="The MGC Project Team"/>
        </authorList>
    </citation>
    <scope>NUCLEOTIDE SEQUENCE [LARGE SCALE MRNA] (ISOFORM 1)</scope>
    <source>
        <strain>C57BL/6J</strain>
        <tissue>Retina</tissue>
    </source>
</reference>
<reference key="5">
    <citation type="submission" date="2007-03" db="UniProtKB">
        <authorList>
            <person name="Lubec G."/>
            <person name="Klug S."/>
        </authorList>
    </citation>
    <scope>PROTEIN SEQUENCE OF 58-71</scope>
    <scope>IDENTIFICATION BY MASS SPECTROMETRY</scope>
    <source>
        <tissue>Hippocampus</tissue>
    </source>
</reference>
<reference key="6">
    <citation type="journal article" date="1999" name="Dev. Biol.">
        <title>The phosphoprotein protein PEA-15 inhibits Fas- but increases TNF-R1-mediated caspase-8 activity and apoptosis.</title>
        <authorList>
            <person name="Estelles A."/>
            <person name="Charlton C.A."/>
            <person name="Blau H.M."/>
        </authorList>
    </citation>
    <scope>FUNCTION</scope>
    <scope>PHOSPHORYLATION AT SER-104 AND SER-116</scope>
    <scope>MUTAGENESIS OF SER-104 AND SER-116</scope>
</reference>
<reference key="7">
    <citation type="journal article" date="2000" name="J. Biol. Chem.">
        <title>Regulation of expression of phospholipase D1 and D2 by PEA-15, a novel protein that interacts with them.</title>
        <authorList>
            <person name="Zhang Y."/>
            <person name="Redina O."/>
            <person name="Altshuller Y.M."/>
            <person name="Yamazaki M."/>
            <person name="Ramos J."/>
            <person name="Chneiweiss H."/>
            <person name="Kanaho Y."/>
            <person name="Frohman M.A."/>
        </authorList>
    </citation>
    <scope>INTERACTION WITH PLD1 AND PLD2</scope>
    <scope>SUBCELLULAR LOCATION</scope>
</reference>
<reference key="8">
    <citation type="journal article" date="2009" name="Mol. Cell. Proteomics">
        <title>Large scale localization of protein phosphorylation by use of electron capture dissociation mass spectrometry.</title>
        <authorList>
            <person name="Sweet S.M."/>
            <person name="Bailey C.M."/>
            <person name="Cunningham D.L."/>
            <person name="Heath J.K."/>
            <person name="Cooper H.J."/>
        </authorList>
    </citation>
    <scope>PHOSPHORYLATION [LARGE SCALE ANALYSIS] AT SER-104 AND SER-116</scope>
    <scope>IDENTIFICATION BY MASS SPECTROMETRY [LARGE SCALE ANALYSIS]</scope>
    <source>
        <tissue>Embryonic fibroblast</tissue>
    </source>
</reference>
<reference key="9">
    <citation type="journal article" date="2010" name="Cell">
        <title>A tissue-specific atlas of mouse protein phosphorylation and expression.</title>
        <authorList>
            <person name="Huttlin E.L."/>
            <person name="Jedrychowski M.P."/>
            <person name="Elias J.E."/>
            <person name="Goswami T."/>
            <person name="Rad R."/>
            <person name="Beausoleil S.A."/>
            <person name="Villen J."/>
            <person name="Haas W."/>
            <person name="Sowa M.E."/>
            <person name="Gygi S.P."/>
        </authorList>
    </citation>
    <scope>PHOSPHORYLATION [LARGE SCALE ANALYSIS] AT SER-90 AND SER-116</scope>
    <scope>IDENTIFICATION BY MASS SPECTROMETRY [LARGE SCALE ANALYSIS]</scope>
    <source>
        <tissue>Brain</tissue>
        <tissue>Brown adipose tissue</tissue>
        <tissue>Heart</tissue>
        <tissue>Kidney</tissue>
        <tissue>Liver</tissue>
        <tissue>Lung</tissue>
        <tissue>Pancreas</tissue>
        <tissue>Spleen</tissue>
        <tissue>Testis</tissue>
    </source>
</reference>
<organism>
    <name type="scientific">Mus musculus</name>
    <name type="common">Mouse</name>
    <dbReference type="NCBI Taxonomy" id="10090"/>
    <lineage>
        <taxon>Eukaryota</taxon>
        <taxon>Metazoa</taxon>
        <taxon>Chordata</taxon>
        <taxon>Craniata</taxon>
        <taxon>Vertebrata</taxon>
        <taxon>Euteleostomi</taxon>
        <taxon>Mammalia</taxon>
        <taxon>Eutheria</taxon>
        <taxon>Euarchontoglires</taxon>
        <taxon>Glires</taxon>
        <taxon>Rodentia</taxon>
        <taxon>Myomorpha</taxon>
        <taxon>Muroidea</taxon>
        <taxon>Muridae</taxon>
        <taxon>Murinae</taxon>
        <taxon>Mus</taxon>
        <taxon>Mus</taxon>
    </lineage>
</organism>
<proteinExistence type="evidence at protein level"/>